<reference key="1">
    <citation type="journal article" date="1995" name="Oncogene">
        <title>Expression of ril, a novel LIM domain gene, is down-regulated in Hras-transformed cells and restored in phenotypic revertants.</title>
        <authorList>
            <person name="Kiess M."/>
            <person name="Scharm B."/>
            <person name="Aguzzi A."/>
            <person name="Hajnal A."/>
            <person name="Klemenz R."/>
            <person name="Schwarte-Waldhoff I."/>
            <person name="Schaefer R."/>
        </authorList>
    </citation>
    <scope>NUCLEOTIDE SEQUENCE [MRNA]</scope>
    <scope>TISSUE SPECIFICITY</scope>
    <source>
        <strain>Sprague-Dawley</strain>
        <tissue>Liver</tissue>
    </source>
</reference>
<reference key="2">
    <citation type="journal article" date="2004" name="Exp. Cell Res.">
        <title>The PDZ-LIM protein RIL modulates actin stress fiber turnover and enhances the association of alpha-actinin with F-actin.</title>
        <authorList>
            <person name="Vallenius T."/>
            <person name="Scharm B."/>
            <person name="Vesikansa A."/>
            <person name="Luukko K."/>
            <person name="Schaefer R."/>
            <person name="Maekelae T.P."/>
        </authorList>
    </citation>
    <scope>FUNCTION</scope>
    <scope>INTERACTION WITH ACTN1</scope>
    <scope>SUBCELLULAR LOCATION</scope>
</reference>
<reference key="3">
    <citation type="journal article" date="2004" name="J. Neurosci.">
        <title>Actin/alpha-actinin-dependent transport of AMPA receptors in dendritic spines: role of the PDZ-LIM protein RIL.</title>
        <authorList>
            <person name="Schulz T.W."/>
            <person name="Nakagawa T."/>
            <person name="Licznerski P."/>
            <person name="Pawlak V."/>
            <person name="Kolleker A."/>
            <person name="Rozov A."/>
            <person name="Kim J."/>
            <person name="Dittgen T."/>
            <person name="Koehr G."/>
            <person name="Sheng M."/>
            <person name="Seeburg P.H."/>
            <person name="Osten P."/>
        </authorList>
    </citation>
    <scope>FUNCTION</scope>
    <scope>INTERACTION WITH ACTN2 AND GRIA1</scope>
    <scope>SUBCELLULAR LOCATION</scope>
</reference>
<reference key="4">
    <citation type="journal article" date="2012" name="Exp. Cell Res.">
        <title>CLP36 and RIL recruit alpha-actinin-1 to stress fibers and differentially regulate stress fiber dynamics in F2408 fibroblasts.</title>
        <authorList>
            <person name="Miyazaki K."/>
            <person name="Ohno K."/>
            <person name="Tamura N."/>
            <person name="Sasaki T."/>
            <person name="Sato K."/>
        </authorList>
    </citation>
    <scope>FUNCTION</scope>
    <scope>INTERACTION WITH PDLIM1</scope>
    <scope>SUBCELLULAR LOCATION</scope>
    <scope>TISSUE SPECIFICITY</scope>
</reference>
<reference key="5">
    <citation type="journal article" date="2012" name="Nat. Commun.">
        <title>Quantitative maps of protein phosphorylation sites across 14 different rat organs and tissues.</title>
        <authorList>
            <person name="Lundby A."/>
            <person name="Secher A."/>
            <person name="Lage K."/>
            <person name="Nordsborg N.B."/>
            <person name="Dmytriyev A."/>
            <person name="Lundby C."/>
            <person name="Olsen J.V."/>
        </authorList>
    </citation>
    <scope>PHOSPHORYLATION [LARGE SCALE ANALYSIS] AT SER-111; SER-119; SER-124 AND SER-134</scope>
    <scope>IDENTIFICATION BY MASS SPECTROMETRY [LARGE SCALE ANALYSIS]</scope>
</reference>
<accession>P36202</accession>
<keyword id="KW-0966">Cell projection</keyword>
<keyword id="KW-0963">Cytoplasm</keyword>
<keyword id="KW-0206">Cytoskeleton</keyword>
<keyword id="KW-0967">Endosome</keyword>
<keyword id="KW-0440">LIM domain</keyword>
<keyword id="KW-0472">Membrane</keyword>
<keyword id="KW-0479">Metal-binding</keyword>
<keyword id="KW-0539">Nucleus</keyword>
<keyword id="KW-0597">Phosphoprotein</keyword>
<keyword id="KW-1185">Reference proteome</keyword>
<keyword id="KW-0770">Synapse</keyword>
<keyword id="KW-0771">Synaptosome</keyword>
<keyword id="KW-0862">Zinc</keyword>
<protein>
    <recommendedName>
        <fullName>PDZ and LIM domain protein 4</fullName>
    </recommendedName>
    <alternativeName>
        <fullName>H-REV18</fullName>
    </alternativeName>
    <alternativeName>
        <fullName>LIM protein RIL</fullName>
    </alternativeName>
    <alternativeName>
        <fullName>RIT-18</fullName>
    </alternativeName>
    <alternativeName>
        <fullName evidence="10">Reversion-induced LIM protein</fullName>
    </alternativeName>
</protein>
<organism>
    <name type="scientific">Rattus norvegicus</name>
    <name type="common">Rat</name>
    <dbReference type="NCBI Taxonomy" id="10116"/>
    <lineage>
        <taxon>Eukaryota</taxon>
        <taxon>Metazoa</taxon>
        <taxon>Chordata</taxon>
        <taxon>Craniata</taxon>
        <taxon>Vertebrata</taxon>
        <taxon>Euteleostomi</taxon>
        <taxon>Mammalia</taxon>
        <taxon>Eutheria</taxon>
        <taxon>Euarchontoglires</taxon>
        <taxon>Glires</taxon>
        <taxon>Rodentia</taxon>
        <taxon>Myomorpha</taxon>
        <taxon>Muroidea</taxon>
        <taxon>Muridae</taxon>
        <taxon>Murinae</taxon>
        <taxon>Rattus</taxon>
    </lineage>
</organism>
<feature type="chain" id="PRO_0000075875" description="PDZ and LIM domain protein 4">
    <location>
        <begin position="1"/>
        <end position="330"/>
    </location>
</feature>
<feature type="domain" description="PDZ" evidence="4">
    <location>
        <begin position="1"/>
        <end position="84"/>
    </location>
</feature>
<feature type="domain" description="LIM zinc-binding" evidence="3">
    <location>
        <begin position="255"/>
        <end position="305"/>
    </location>
</feature>
<feature type="region of interest" description="Disordered" evidence="5">
    <location>
        <begin position="104"/>
        <end position="154"/>
    </location>
</feature>
<feature type="region of interest" description="Disordered" evidence="5">
    <location>
        <begin position="219"/>
        <end position="239"/>
    </location>
</feature>
<feature type="compositionally biased region" description="Polar residues" evidence="5">
    <location>
        <begin position="111"/>
        <end position="122"/>
    </location>
</feature>
<feature type="modified residue" description="Phosphoserine" evidence="12">
    <location>
        <position position="111"/>
    </location>
</feature>
<feature type="modified residue" description="Phosphoserine" evidence="2">
    <location>
        <position position="115"/>
    </location>
</feature>
<feature type="modified residue" description="Phosphoserine" evidence="2">
    <location>
        <position position="118"/>
    </location>
</feature>
<feature type="modified residue" description="Phosphoserine" evidence="12">
    <location>
        <position position="119"/>
    </location>
</feature>
<feature type="modified residue" description="Phosphoserine" evidence="12">
    <location>
        <position position="124"/>
    </location>
</feature>
<feature type="modified residue" description="Phosphoserine" evidence="12">
    <location>
        <position position="134"/>
    </location>
</feature>
<gene>
    <name type="primary">Pdlim4</name>
    <name evidence="10" type="synonym">Ril</name>
</gene>
<dbReference type="EMBL" id="X76454">
    <property type="protein sequence ID" value="CAA53992.1"/>
    <property type="molecule type" value="mRNA"/>
</dbReference>
<dbReference type="PIR" id="S71828">
    <property type="entry name" value="S71828"/>
</dbReference>
<dbReference type="RefSeq" id="NP_058758.1">
    <property type="nucleotide sequence ID" value="NM_017062.2"/>
</dbReference>
<dbReference type="SMR" id="P36202"/>
<dbReference type="FunCoup" id="P36202">
    <property type="interactions" value="159"/>
</dbReference>
<dbReference type="IntAct" id="P36202">
    <property type="interactions" value="2"/>
</dbReference>
<dbReference type="STRING" id="10116.ENSRNOP00000064261"/>
<dbReference type="iPTMnet" id="P36202"/>
<dbReference type="PhosphoSitePlus" id="P36202"/>
<dbReference type="PaxDb" id="10116-ENSRNOP00000064261"/>
<dbReference type="GeneID" id="24915"/>
<dbReference type="KEGG" id="rno:24915"/>
<dbReference type="AGR" id="RGD:3575"/>
<dbReference type="CTD" id="8572"/>
<dbReference type="RGD" id="3575">
    <property type="gene designation" value="Pdlim4"/>
</dbReference>
<dbReference type="eggNOG" id="KOG1703">
    <property type="taxonomic scope" value="Eukaryota"/>
</dbReference>
<dbReference type="InParanoid" id="P36202"/>
<dbReference type="PhylomeDB" id="P36202"/>
<dbReference type="PRO" id="PR:P36202"/>
<dbReference type="Proteomes" id="UP000002494">
    <property type="component" value="Unplaced"/>
</dbReference>
<dbReference type="GO" id="GO:0015629">
    <property type="term" value="C:actin cytoskeleton"/>
    <property type="evidence" value="ECO:0000353"/>
    <property type="project" value="UniProtKB"/>
</dbReference>
<dbReference type="GO" id="GO:0005912">
    <property type="term" value="C:adherens junction"/>
    <property type="evidence" value="ECO:0000318"/>
    <property type="project" value="GO_Central"/>
</dbReference>
<dbReference type="GO" id="GO:0005737">
    <property type="term" value="C:cytoplasm"/>
    <property type="evidence" value="ECO:0000266"/>
    <property type="project" value="RGD"/>
</dbReference>
<dbReference type="GO" id="GO:0005856">
    <property type="term" value="C:cytoskeleton"/>
    <property type="evidence" value="ECO:0000266"/>
    <property type="project" value="RGD"/>
</dbReference>
<dbReference type="GO" id="GO:0043197">
    <property type="term" value="C:dendritic spine"/>
    <property type="evidence" value="ECO:0000314"/>
    <property type="project" value="UniProtKB"/>
</dbReference>
<dbReference type="GO" id="GO:0031905">
    <property type="term" value="C:early endosome lumen"/>
    <property type="evidence" value="ECO:0000314"/>
    <property type="project" value="UniProtKB"/>
</dbReference>
<dbReference type="GO" id="GO:0031901">
    <property type="term" value="C:early endosome membrane"/>
    <property type="evidence" value="ECO:0007669"/>
    <property type="project" value="UniProtKB-SubCell"/>
</dbReference>
<dbReference type="GO" id="GO:0031941">
    <property type="term" value="C:filamentous actin"/>
    <property type="evidence" value="ECO:0000266"/>
    <property type="project" value="RGD"/>
</dbReference>
<dbReference type="GO" id="GO:0098978">
    <property type="term" value="C:glutamatergic synapse"/>
    <property type="evidence" value="ECO:0000314"/>
    <property type="project" value="SynGO"/>
</dbReference>
<dbReference type="GO" id="GO:0030027">
    <property type="term" value="C:lamellipodium"/>
    <property type="evidence" value="ECO:0000266"/>
    <property type="project" value="RGD"/>
</dbReference>
<dbReference type="GO" id="GO:0005634">
    <property type="term" value="C:nucleus"/>
    <property type="evidence" value="ECO:0000266"/>
    <property type="project" value="RGD"/>
</dbReference>
<dbReference type="GO" id="GO:0048471">
    <property type="term" value="C:perinuclear region of cytoplasm"/>
    <property type="evidence" value="ECO:0000266"/>
    <property type="project" value="RGD"/>
</dbReference>
<dbReference type="GO" id="GO:0014069">
    <property type="term" value="C:postsynaptic density"/>
    <property type="evidence" value="ECO:0000314"/>
    <property type="project" value="SynGO"/>
</dbReference>
<dbReference type="GO" id="GO:0045211">
    <property type="term" value="C:postsynaptic membrane"/>
    <property type="evidence" value="ECO:0000314"/>
    <property type="project" value="UniProtKB"/>
</dbReference>
<dbReference type="GO" id="GO:0034777">
    <property type="term" value="C:recycling endosome lumen"/>
    <property type="evidence" value="ECO:0000314"/>
    <property type="project" value="UniProtKB"/>
</dbReference>
<dbReference type="GO" id="GO:0055038">
    <property type="term" value="C:recycling endosome membrane"/>
    <property type="evidence" value="ECO:0007669"/>
    <property type="project" value="UniProtKB-SubCell"/>
</dbReference>
<dbReference type="GO" id="GO:0001725">
    <property type="term" value="C:stress fiber"/>
    <property type="evidence" value="ECO:0000314"/>
    <property type="project" value="UniProtKB"/>
</dbReference>
<dbReference type="GO" id="GO:0030018">
    <property type="term" value="C:Z disc"/>
    <property type="evidence" value="ECO:0000318"/>
    <property type="project" value="GO_Central"/>
</dbReference>
<dbReference type="GO" id="GO:0003779">
    <property type="term" value="F:actin binding"/>
    <property type="evidence" value="ECO:0000318"/>
    <property type="project" value="GO_Central"/>
</dbReference>
<dbReference type="GO" id="GO:0042805">
    <property type="term" value="F:actinin binding"/>
    <property type="evidence" value="ECO:0000353"/>
    <property type="project" value="RGD"/>
</dbReference>
<dbReference type="GO" id="GO:0051393">
    <property type="term" value="F:alpha-actinin binding"/>
    <property type="evidence" value="ECO:0000353"/>
    <property type="project" value="UniProtKB"/>
</dbReference>
<dbReference type="GO" id="GO:0046872">
    <property type="term" value="F:metal ion binding"/>
    <property type="evidence" value="ECO:0007669"/>
    <property type="project" value="UniProtKB-KW"/>
</dbReference>
<dbReference type="GO" id="GO:0051371">
    <property type="term" value="F:muscle alpha-actinin binding"/>
    <property type="evidence" value="ECO:0000318"/>
    <property type="project" value="GO_Central"/>
</dbReference>
<dbReference type="GO" id="GO:0042803">
    <property type="term" value="F:protein homodimerization activity"/>
    <property type="evidence" value="ECO:0000266"/>
    <property type="project" value="RGD"/>
</dbReference>
<dbReference type="GO" id="GO:0019903">
    <property type="term" value="F:protein phosphatase binding"/>
    <property type="evidence" value="ECO:0000266"/>
    <property type="project" value="RGD"/>
</dbReference>
<dbReference type="GO" id="GO:0030036">
    <property type="term" value="P:actin cytoskeleton organization"/>
    <property type="evidence" value="ECO:0000314"/>
    <property type="project" value="RGD"/>
</dbReference>
<dbReference type="GO" id="GO:0098976">
    <property type="term" value="P:excitatory chemical synaptic transmission"/>
    <property type="evidence" value="ECO:0000314"/>
    <property type="project" value="UniProtKB"/>
</dbReference>
<dbReference type="GO" id="GO:0007507">
    <property type="term" value="P:heart development"/>
    <property type="evidence" value="ECO:0000318"/>
    <property type="project" value="GO_Central"/>
</dbReference>
<dbReference type="GO" id="GO:0061061">
    <property type="term" value="P:muscle structure development"/>
    <property type="evidence" value="ECO:0000318"/>
    <property type="project" value="GO_Central"/>
</dbReference>
<dbReference type="GO" id="GO:0051496">
    <property type="term" value="P:positive regulation of stress fiber assembly"/>
    <property type="evidence" value="ECO:0000314"/>
    <property type="project" value="UniProtKB"/>
</dbReference>
<dbReference type="GO" id="GO:0099072">
    <property type="term" value="P:regulation of postsynaptic membrane neurotransmitter receptor levels"/>
    <property type="evidence" value="ECO:0000314"/>
    <property type="project" value="SynGO"/>
</dbReference>
<dbReference type="CDD" id="cd09451">
    <property type="entry name" value="LIM_RIL"/>
    <property type="match status" value="1"/>
</dbReference>
<dbReference type="CDD" id="cd06753">
    <property type="entry name" value="PDZ_PDLIM-like"/>
    <property type="match status" value="1"/>
</dbReference>
<dbReference type="FunFam" id="2.10.110.10:FF:000026">
    <property type="entry name" value="PDZ and LIM domain protein 3"/>
    <property type="match status" value="1"/>
</dbReference>
<dbReference type="FunFam" id="2.30.42.10:FF:000055">
    <property type="entry name" value="PDZ and LIM domain protein 3"/>
    <property type="match status" value="1"/>
</dbReference>
<dbReference type="Gene3D" id="2.30.42.10">
    <property type="match status" value="1"/>
</dbReference>
<dbReference type="Gene3D" id="2.10.110.10">
    <property type="entry name" value="Cysteine Rich Protein"/>
    <property type="match status" value="1"/>
</dbReference>
<dbReference type="InterPro" id="IPR031847">
    <property type="entry name" value="PDLI1-4/Zasp-like_mid"/>
</dbReference>
<dbReference type="InterPro" id="IPR001478">
    <property type="entry name" value="PDZ"/>
</dbReference>
<dbReference type="InterPro" id="IPR050604">
    <property type="entry name" value="PDZ-LIM_domain"/>
</dbReference>
<dbReference type="InterPro" id="IPR036034">
    <property type="entry name" value="PDZ_sf"/>
</dbReference>
<dbReference type="InterPro" id="IPR001781">
    <property type="entry name" value="Znf_LIM"/>
</dbReference>
<dbReference type="PANTHER" id="PTHR24214:SF6">
    <property type="entry name" value="PDZ AND LIM DOMAIN PROTEIN 4"/>
    <property type="match status" value="1"/>
</dbReference>
<dbReference type="PANTHER" id="PTHR24214">
    <property type="entry name" value="PDZ AND LIM DOMAIN PROTEIN ZASP"/>
    <property type="match status" value="1"/>
</dbReference>
<dbReference type="Pfam" id="PF15936">
    <property type="entry name" value="DUF4749"/>
    <property type="match status" value="1"/>
</dbReference>
<dbReference type="Pfam" id="PF00412">
    <property type="entry name" value="LIM"/>
    <property type="match status" value="1"/>
</dbReference>
<dbReference type="Pfam" id="PF00595">
    <property type="entry name" value="PDZ"/>
    <property type="match status" value="1"/>
</dbReference>
<dbReference type="SMART" id="SM00132">
    <property type="entry name" value="LIM"/>
    <property type="match status" value="1"/>
</dbReference>
<dbReference type="SMART" id="SM00228">
    <property type="entry name" value="PDZ"/>
    <property type="match status" value="1"/>
</dbReference>
<dbReference type="SUPFAM" id="SSF57716">
    <property type="entry name" value="Glucocorticoid receptor-like (DNA-binding domain)"/>
    <property type="match status" value="2"/>
</dbReference>
<dbReference type="SUPFAM" id="SSF50156">
    <property type="entry name" value="PDZ domain-like"/>
    <property type="match status" value="1"/>
</dbReference>
<dbReference type="PROSITE" id="PS00478">
    <property type="entry name" value="LIM_DOMAIN_1"/>
    <property type="match status" value="1"/>
</dbReference>
<dbReference type="PROSITE" id="PS50023">
    <property type="entry name" value="LIM_DOMAIN_2"/>
    <property type="match status" value="1"/>
</dbReference>
<dbReference type="PROSITE" id="PS50106">
    <property type="entry name" value="PDZ"/>
    <property type="match status" value="1"/>
</dbReference>
<name>PDLI4_RAT</name>
<evidence type="ECO:0000250" key="1">
    <source>
        <dbReference type="UniProtKB" id="P50479"/>
    </source>
</evidence>
<evidence type="ECO:0000250" key="2">
    <source>
        <dbReference type="UniProtKB" id="P70271"/>
    </source>
</evidence>
<evidence type="ECO:0000255" key="3">
    <source>
        <dbReference type="PROSITE-ProRule" id="PRU00125"/>
    </source>
</evidence>
<evidence type="ECO:0000255" key="4">
    <source>
        <dbReference type="PROSITE-ProRule" id="PRU00143"/>
    </source>
</evidence>
<evidence type="ECO:0000256" key="5">
    <source>
        <dbReference type="SAM" id="MobiDB-lite"/>
    </source>
</evidence>
<evidence type="ECO:0000269" key="6">
    <source>
    </source>
</evidence>
<evidence type="ECO:0000269" key="7">
    <source>
    </source>
</evidence>
<evidence type="ECO:0000269" key="8">
    <source>
    </source>
</evidence>
<evidence type="ECO:0000269" key="9">
    <source>
    </source>
</evidence>
<evidence type="ECO:0000303" key="10">
    <source>
    </source>
</evidence>
<evidence type="ECO:0000305" key="11"/>
<evidence type="ECO:0007744" key="12">
    <source>
    </source>
</evidence>
<sequence length="330" mass="35521">MTHAVTLRGPSPWGFRLVGGRDFSAPLTISRVHAGSKAALAALCPGDSIQAINGESTELMTHLEAQNRIKGCHDHLTLSVSRPENKNWPSSPNDKAQAHRIHIDPEAQDGSPATSRRSSISGISLEDNRSGLGSPYGQPPRLPVPHNGSSNEVTLPSQMSALHVSPPPSADTPRILPRNRDCRVDLGSEVYRMLREPAEPAASEPKQSGSFRYLQGMLEAGEGGDRPGSGGSRNLKPAASKLGAPLSGLQGLPECTRCGHGIVGTIVKARDKLYHPECFMCSDCGLNLKQRGYFFLDERLYCENHAKARVKPPEGYDVVAVYPNAKVELV</sequence>
<proteinExistence type="evidence at protein level"/>
<comment type="function">
    <text evidence="1 6 7 8">Suppresses SRC activation by recognizing and binding to active SRC and facilitating PTPN13-mediated dephosphorylation of SRC 'Tyr-419' leading to its inactivation. Inactivated SRC dissociates from this protein allowing the initiation of a new SRC inactivation cycle (By similarity). Involved in reorganization of the actin cytoskeleton. In nonmuscle cells, binds to ACTN1 (alpha-actinin-1), increases the affinity of ACTN1 to F-actin (filamentous actin), and promotes formation of actin stress fibers (PubMed:14729062, PubMed:22659164). Involved in regulation of the synaptic AMPA receptor transport in dendritic spines of hippocampal pyramidal neurons directing the receptors toward an insertion at the postsynaptic membrane. Links endosomal surface-internalized GRIA1-containing AMPA receptors to the alpha-actinin/actin cytoskeleton. Increases AMPA receptor-mediated excitatory postsynaptic currents in neurons (PubMed:15456832).</text>
</comment>
<comment type="subunit">
    <text evidence="1 2 6 7 8">Homodimer (By similarity). Interacts (via C-terminus only or via combined C-terminus and LIM domain, but not LIM domain only) with PTPN13 (via the second or fourth PDZ domains). Found in a complex with PTPN13 and TRIP6 (By similarity). Interacts (via PDZ domain) with ACTN1 and ACTN2 (via C-terminal SDL residues) (PubMed:14729062, PubMed:15456832). Interacts (via PDZ domain) with TRIP6 (via the second LIM domain or via the third LIM domain plus C-terminus) (By similarity). Interacts (via LIM domain) with GRIA1 (via C-terminus); this interaction as well as the interaction with alpha-actinin is required for their colocalization in early endosomes (PubMed:15456832). Interacts with PDLIM1 (PubMed:22659164). Forms (via LIM domain) a heterodimer with PDLIM3 (By similarity). Interacts directly with SRC (via kinase domain and to a lesser extent the SH2 domain) (By similarity).</text>
</comment>
<comment type="subcellular location">
    <subcellularLocation>
        <location evidence="6 7 8">Cytoplasm</location>
        <location evidence="6 7 8">Cytoskeleton</location>
    </subcellularLocation>
    <subcellularLocation>
        <location evidence="7">Cell projection</location>
        <location evidence="7">Dendritic spine</location>
    </subcellularLocation>
    <subcellularLocation>
        <location evidence="7">Early endosome membrane</location>
        <topology evidence="11">Peripheral membrane protein</topology>
        <orientation evidence="11">Cytoplasmic side</orientation>
    </subcellularLocation>
    <subcellularLocation>
        <location evidence="7">Recycling endosome membrane</location>
        <topology evidence="11">Peripheral membrane protein</topology>
        <orientation evidence="11">Cytoplasmic side</orientation>
    </subcellularLocation>
    <subcellularLocation>
        <location evidence="1">Nucleus</location>
    </subcellularLocation>
    <subcellularLocation>
        <location evidence="1">Cytoplasm</location>
        <location evidence="1">Perinuclear region</location>
    </subcellularLocation>
    <subcellularLocation>
        <location evidence="1">Cell projection</location>
        <location evidence="1">Lamellipodium</location>
    </subcellularLocation>
    <subcellularLocation>
        <location evidence="7">Synapse</location>
        <location evidence="7">Synaptosome</location>
    </subcellularLocation>
    <text evidence="1 6 7 8">Localizes to actin stress fibers in nonmuscle cells (PubMed:14729062, PubMed:22659164). Colocalizes with GRIA1 in early endosomes. Enriched in numerous but not all spine-like structures along dendritic branches. Colocalizes with actin and enriched at sites containing larger amounts of actin and alpha-actinin. Targeted efficiently to spines via its PDZ domain-mediated interaction with the alpha-actinin/actin cytoskeletal complex. Localizes to synaptosomes in brain (PubMed:15456832). Colocalizes with F-actin. Colocalizes with TRIP6 at cell-cell contacts and lamellipodia. In the cytoplasm, displays a fibrillar pattern with characteristic thick fibers and occasional clusters. Colocalizes with the actin stress fibers. Oxidative stress induces redistribution from cytoskeleton to cytosol. Colocalizes with SRC at the perinuclear region, but not at focal adhesions (By similarity).</text>
</comment>
<comment type="tissue specificity">
    <text evidence="8 9">Detected in several tissues, most prominent in brain and heart of adults (PubMed:7824279). Expressed in embryonic fibroblasts (PubMed:22659164).</text>
</comment>
<comment type="PTM">
    <text evidence="2">Phosphorylated on tyrosine residue(s). Can be dephosphorylated by PTPN13.</text>
</comment>